<proteinExistence type="inferred from homology"/>
<reference key="1">
    <citation type="journal article" date="2005" name="J. Bacteriol.">
        <title>Insights on evolution of virulence and resistance from the complete genome analysis of an early methicillin-resistant Staphylococcus aureus strain and a biofilm-producing methicillin-resistant Staphylococcus epidermidis strain.</title>
        <authorList>
            <person name="Gill S.R."/>
            <person name="Fouts D.E."/>
            <person name="Archer G.L."/>
            <person name="Mongodin E.F."/>
            <person name="DeBoy R.T."/>
            <person name="Ravel J."/>
            <person name="Paulsen I.T."/>
            <person name="Kolonay J.F."/>
            <person name="Brinkac L.M."/>
            <person name="Beanan M.J."/>
            <person name="Dodson R.J."/>
            <person name="Daugherty S.C."/>
            <person name="Madupu R."/>
            <person name="Angiuoli S.V."/>
            <person name="Durkin A.S."/>
            <person name="Haft D.H."/>
            <person name="Vamathevan J.J."/>
            <person name="Khouri H."/>
            <person name="Utterback T.R."/>
            <person name="Lee C."/>
            <person name="Dimitrov G."/>
            <person name="Jiang L."/>
            <person name="Qin H."/>
            <person name="Weidman J."/>
            <person name="Tran K."/>
            <person name="Kang K.H."/>
            <person name="Hance I.R."/>
            <person name="Nelson K.E."/>
            <person name="Fraser C.M."/>
        </authorList>
    </citation>
    <scope>NUCLEOTIDE SEQUENCE [LARGE SCALE GENOMIC DNA]</scope>
    <source>
        <strain>COL</strain>
    </source>
</reference>
<accession>Q5HFJ3</accession>
<name>ERA_STAAC</name>
<dbReference type="EMBL" id="CP000046">
    <property type="protein sequence ID" value="AAW38240.1"/>
    <property type="molecule type" value="Genomic_DNA"/>
</dbReference>
<dbReference type="RefSeq" id="WP_000134765.1">
    <property type="nucleotide sequence ID" value="NZ_JBGOFO010000003.1"/>
</dbReference>
<dbReference type="SMR" id="Q5HFJ3"/>
<dbReference type="KEGG" id="sac:SACOL1624"/>
<dbReference type="HOGENOM" id="CLU_038009_1_0_9"/>
<dbReference type="Proteomes" id="UP000000530">
    <property type="component" value="Chromosome"/>
</dbReference>
<dbReference type="GO" id="GO:0005829">
    <property type="term" value="C:cytosol"/>
    <property type="evidence" value="ECO:0007669"/>
    <property type="project" value="TreeGrafter"/>
</dbReference>
<dbReference type="GO" id="GO:0005886">
    <property type="term" value="C:plasma membrane"/>
    <property type="evidence" value="ECO:0007669"/>
    <property type="project" value="UniProtKB-SubCell"/>
</dbReference>
<dbReference type="GO" id="GO:0005525">
    <property type="term" value="F:GTP binding"/>
    <property type="evidence" value="ECO:0007669"/>
    <property type="project" value="UniProtKB-UniRule"/>
</dbReference>
<dbReference type="GO" id="GO:0003924">
    <property type="term" value="F:GTPase activity"/>
    <property type="evidence" value="ECO:0007669"/>
    <property type="project" value="UniProtKB-UniRule"/>
</dbReference>
<dbReference type="GO" id="GO:0043024">
    <property type="term" value="F:ribosomal small subunit binding"/>
    <property type="evidence" value="ECO:0007669"/>
    <property type="project" value="TreeGrafter"/>
</dbReference>
<dbReference type="GO" id="GO:0070181">
    <property type="term" value="F:small ribosomal subunit rRNA binding"/>
    <property type="evidence" value="ECO:0007669"/>
    <property type="project" value="UniProtKB-UniRule"/>
</dbReference>
<dbReference type="GO" id="GO:0000028">
    <property type="term" value="P:ribosomal small subunit assembly"/>
    <property type="evidence" value="ECO:0007669"/>
    <property type="project" value="TreeGrafter"/>
</dbReference>
<dbReference type="CDD" id="cd04163">
    <property type="entry name" value="Era"/>
    <property type="match status" value="1"/>
</dbReference>
<dbReference type="CDD" id="cd22534">
    <property type="entry name" value="KH-II_Era"/>
    <property type="match status" value="1"/>
</dbReference>
<dbReference type="FunFam" id="3.30.300.20:FF:000003">
    <property type="entry name" value="GTPase Era"/>
    <property type="match status" value="1"/>
</dbReference>
<dbReference type="FunFam" id="3.40.50.300:FF:000094">
    <property type="entry name" value="GTPase Era"/>
    <property type="match status" value="1"/>
</dbReference>
<dbReference type="Gene3D" id="3.30.300.20">
    <property type="match status" value="1"/>
</dbReference>
<dbReference type="Gene3D" id="3.40.50.300">
    <property type="entry name" value="P-loop containing nucleotide triphosphate hydrolases"/>
    <property type="match status" value="1"/>
</dbReference>
<dbReference type="HAMAP" id="MF_00367">
    <property type="entry name" value="GTPase_Era"/>
    <property type="match status" value="1"/>
</dbReference>
<dbReference type="InterPro" id="IPR030388">
    <property type="entry name" value="G_ERA_dom"/>
</dbReference>
<dbReference type="InterPro" id="IPR006073">
    <property type="entry name" value="GTP-bd"/>
</dbReference>
<dbReference type="InterPro" id="IPR005662">
    <property type="entry name" value="GTPase_Era-like"/>
</dbReference>
<dbReference type="InterPro" id="IPR015946">
    <property type="entry name" value="KH_dom-like_a/b"/>
</dbReference>
<dbReference type="InterPro" id="IPR004044">
    <property type="entry name" value="KH_dom_type_2"/>
</dbReference>
<dbReference type="InterPro" id="IPR009019">
    <property type="entry name" value="KH_sf_prok-type"/>
</dbReference>
<dbReference type="InterPro" id="IPR027417">
    <property type="entry name" value="P-loop_NTPase"/>
</dbReference>
<dbReference type="InterPro" id="IPR005225">
    <property type="entry name" value="Small_GTP-bd"/>
</dbReference>
<dbReference type="NCBIfam" id="TIGR00436">
    <property type="entry name" value="era"/>
    <property type="match status" value="1"/>
</dbReference>
<dbReference type="NCBIfam" id="NF000908">
    <property type="entry name" value="PRK00089.1"/>
    <property type="match status" value="1"/>
</dbReference>
<dbReference type="NCBIfam" id="TIGR00231">
    <property type="entry name" value="small_GTP"/>
    <property type="match status" value="1"/>
</dbReference>
<dbReference type="PANTHER" id="PTHR42698">
    <property type="entry name" value="GTPASE ERA"/>
    <property type="match status" value="1"/>
</dbReference>
<dbReference type="PANTHER" id="PTHR42698:SF1">
    <property type="entry name" value="GTPASE ERA, MITOCHONDRIAL"/>
    <property type="match status" value="1"/>
</dbReference>
<dbReference type="Pfam" id="PF07650">
    <property type="entry name" value="KH_2"/>
    <property type="match status" value="1"/>
</dbReference>
<dbReference type="Pfam" id="PF01926">
    <property type="entry name" value="MMR_HSR1"/>
    <property type="match status" value="1"/>
</dbReference>
<dbReference type="SUPFAM" id="SSF52540">
    <property type="entry name" value="P-loop containing nucleoside triphosphate hydrolases"/>
    <property type="match status" value="1"/>
</dbReference>
<dbReference type="SUPFAM" id="SSF54814">
    <property type="entry name" value="Prokaryotic type KH domain (KH-domain type II)"/>
    <property type="match status" value="1"/>
</dbReference>
<dbReference type="PROSITE" id="PS51713">
    <property type="entry name" value="G_ERA"/>
    <property type="match status" value="1"/>
</dbReference>
<dbReference type="PROSITE" id="PS50823">
    <property type="entry name" value="KH_TYPE_2"/>
    <property type="match status" value="1"/>
</dbReference>
<keyword id="KW-1003">Cell membrane</keyword>
<keyword id="KW-0963">Cytoplasm</keyword>
<keyword id="KW-0342">GTP-binding</keyword>
<keyword id="KW-0472">Membrane</keyword>
<keyword id="KW-0547">Nucleotide-binding</keyword>
<keyword id="KW-0690">Ribosome biogenesis</keyword>
<keyword id="KW-0694">RNA-binding</keyword>
<keyword id="KW-0699">rRNA-binding</keyword>
<evidence type="ECO:0000255" key="1">
    <source>
        <dbReference type="HAMAP-Rule" id="MF_00367"/>
    </source>
</evidence>
<evidence type="ECO:0000255" key="2">
    <source>
        <dbReference type="PROSITE-ProRule" id="PRU01050"/>
    </source>
</evidence>
<comment type="function">
    <text evidence="1">An essential GTPase that binds both GDP and GTP, with rapid nucleotide exchange. Plays a role in 16S rRNA processing and 30S ribosomal subunit biogenesis and possibly also in cell cycle regulation and energy metabolism.</text>
</comment>
<comment type="subunit">
    <text evidence="1">Monomer.</text>
</comment>
<comment type="subcellular location">
    <subcellularLocation>
        <location>Cytoplasm</location>
    </subcellularLocation>
    <subcellularLocation>
        <location evidence="1">Cell membrane</location>
        <topology evidence="1">Peripheral membrane protein</topology>
    </subcellularLocation>
</comment>
<comment type="similarity">
    <text evidence="1 2">Belongs to the TRAFAC class TrmE-Era-EngA-EngB-Septin-like GTPase superfamily. Era GTPase family.</text>
</comment>
<gene>
    <name evidence="1" type="primary">era</name>
    <name type="ordered locus">SACOL1624</name>
</gene>
<feature type="chain" id="PRO_0000180046" description="GTPase Era">
    <location>
        <begin position="1"/>
        <end position="299"/>
    </location>
</feature>
<feature type="domain" description="Era-type G" evidence="2">
    <location>
        <begin position="5"/>
        <end position="172"/>
    </location>
</feature>
<feature type="domain" description="KH type-2" evidence="1">
    <location>
        <begin position="203"/>
        <end position="280"/>
    </location>
</feature>
<feature type="region of interest" description="G1" evidence="2">
    <location>
        <begin position="13"/>
        <end position="20"/>
    </location>
</feature>
<feature type="region of interest" description="G2" evidence="2">
    <location>
        <begin position="39"/>
        <end position="43"/>
    </location>
</feature>
<feature type="region of interest" description="G3" evidence="2">
    <location>
        <begin position="60"/>
        <end position="63"/>
    </location>
</feature>
<feature type="region of interest" description="G4" evidence="2">
    <location>
        <begin position="122"/>
        <end position="125"/>
    </location>
</feature>
<feature type="region of interest" description="G5" evidence="2">
    <location>
        <begin position="151"/>
        <end position="153"/>
    </location>
</feature>
<feature type="binding site" evidence="1">
    <location>
        <begin position="13"/>
        <end position="20"/>
    </location>
    <ligand>
        <name>GTP</name>
        <dbReference type="ChEBI" id="CHEBI:37565"/>
    </ligand>
</feature>
<feature type="binding site" evidence="1">
    <location>
        <begin position="60"/>
        <end position="64"/>
    </location>
    <ligand>
        <name>GTP</name>
        <dbReference type="ChEBI" id="CHEBI:37565"/>
    </ligand>
</feature>
<feature type="binding site" evidence="1">
    <location>
        <begin position="122"/>
        <end position="125"/>
    </location>
    <ligand>
        <name>GTP</name>
        <dbReference type="ChEBI" id="CHEBI:37565"/>
    </ligand>
</feature>
<sequence>MTEHKSGFVSIIGRPNVGKSTFVNRVIGHKIAIMSDKAQTTRNKIQGVMTRDDAQIIFIDTPGIHKPKHKLGDYMMKVAKNTLSEIDAIMFMVNANEEIGRGDEYIIEMLKNVKTPVFLVLNKIDLVHPDELMPKIEEYQSYMDFTEIVPISALEGLNVDHFIDVLKTYLPEGPKYYPDDQISDHPEQFVVGEIIREKILHLTSEEIPHAIGVNVDRMVKESEDRVHIEATIYVERDSQKGIVIGKGGKKLKEVGKRARRDIEMLLGSKVYLELWVKVQRDWRNKVNFIRQIGYVEDQD</sequence>
<protein>
    <recommendedName>
        <fullName evidence="1">GTPase Era</fullName>
    </recommendedName>
</protein>
<organism>
    <name type="scientific">Staphylococcus aureus (strain COL)</name>
    <dbReference type="NCBI Taxonomy" id="93062"/>
    <lineage>
        <taxon>Bacteria</taxon>
        <taxon>Bacillati</taxon>
        <taxon>Bacillota</taxon>
        <taxon>Bacilli</taxon>
        <taxon>Bacillales</taxon>
        <taxon>Staphylococcaceae</taxon>
        <taxon>Staphylococcus</taxon>
    </lineage>
</organism>